<reference key="1">
    <citation type="journal article" date="2005" name="Nucleic Acids Res.">
        <title>Genome dynamics and diversity of Shigella species, the etiologic agents of bacillary dysentery.</title>
        <authorList>
            <person name="Yang F."/>
            <person name="Yang J."/>
            <person name="Zhang X."/>
            <person name="Chen L."/>
            <person name="Jiang Y."/>
            <person name="Yan Y."/>
            <person name="Tang X."/>
            <person name="Wang J."/>
            <person name="Xiong Z."/>
            <person name="Dong J."/>
            <person name="Xue Y."/>
            <person name="Zhu Y."/>
            <person name="Xu X."/>
            <person name="Sun L."/>
            <person name="Chen S."/>
            <person name="Nie H."/>
            <person name="Peng J."/>
            <person name="Xu J."/>
            <person name="Wang Y."/>
            <person name="Yuan Z."/>
            <person name="Wen Y."/>
            <person name="Yao Z."/>
            <person name="Shen Y."/>
            <person name="Qiang B."/>
            <person name="Hou Y."/>
            <person name="Yu J."/>
            <person name="Jin Q."/>
        </authorList>
    </citation>
    <scope>NUCLEOTIDE SEQUENCE [LARGE SCALE GENOMIC DNA]</scope>
    <source>
        <strain>Sb227</strain>
    </source>
</reference>
<accession>Q326I6</accession>
<comment type="function">
    <text evidence="1">Pore-forming subunit of a potassium efflux system that confers protection against electrophiles. Catalyzes K(+)/H(+) antiport.</text>
</comment>
<comment type="subunit">
    <text evidence="1">Homodimer. Interacts with the regulatory subunit KefF.</text>
</comment>
<comment type="subcellular location">
    <subcellularLocation>
        <location evidence="1">Cell inner membrane</location>
        <topology evidence="1">Multi-pass membrane protein</topology>
    </subcellularLocation>
</comment>
<comment type="similarity">
    <text evidence="1">Belongs to the monovalent cation:proton antiporter 2 (CPA2) transporter (TC 2.A.37) family. KefC subfamily.</text>
</comment>
<organism>
    <name type="scientific">Shigella boydii serotype 4 (strain Sb227)</name>
    <dbReference type="NCBI Taxonomy" id="300268"/>
    <lineage>
        <taxon>Bacteria</taxon>
        <taxon>Pseudomonadati</taxon>
        <taxon>Pseudomonadota</taxon>
        <taxon>Gammaproteobacteria</taxon>
        <taxon>Enterobacterales</taxon>
        <taxon>Enterobacteriaceae</taxon>
        <taxon>Shigella</taxon>
    </lineage>
</organism>
<feature type="chain" id="PRO_1000087397" description="Glutathione-regulated potassium-efflux system protein KefC">
    <location>
        <begin position="1"/>
        <end position="620"/>
    </location>
</feature>
<feature type="transmembrane region" description="Helical" evidence="1">
    <location>
        <begin position="4"/>
        <end position="24"/>
    </location>
</feature>
<feature type="transmembrane region" description="Helical" evidence="1">
    <location>
        <begin position="26"/>
        <end position="46"/>
    </location>
</feature>
<feature type="transmembrane region" description="Helical" evidence="1">
    <location>
        <begin position="54"/>
        <end position="74"/>
    </location>
</feature>
<feature type="transmembrane region" description="Helical" evidence="1">
    <location>
        <begin position="90"/>
        <end position="110"/>
    </location>
</feature>
<feature type="transmembrane region" description="Helical" evidence="1">
    <location>
        <begin position="114"/>
        <end position="134"/>
    </location>
</feature>
<feature type="transmembrane region" description="Helical" evidence="1">
    <location>
        <begin position="149"/>
        <end position="169"/>
    </location>
</feature>
<feature type="transmembrane region" description="Helical" evidence="1">
    <location>
        <begin position="178"/>
        <end position="198"/>
    </location>
</feature>
<feature type="transmembrane region" description="Helical" evidence="1">
    <location>
        <begin position="218"/>
        <end position="238"/>
    </location>
</feature>
<feature type="transmembrane region" description="Helical" evidence="1">
    <location>
        <begin position="270"/>
        <end position="290"/>
    </location>
</feature>
<feature type="transmembrane region" description="Helical" evidence="1">
    <location>
        <begin position="294"/>
        <end position="314"/>
    </location>
</feature>
<feature type="transmembrane region" description="Helical" evidence="1">
    <location>
        <begin position="327"/>
        <end position="347"/>
    </location>
</feature>
<feature type="transmembrane region" description="Helical" evidence="1">
    <location>
        <begin position="359"/>
        <end position="379"/>
    </location>
</feature>
<feature type="domain" description="RCK N-terminal" evidence="2">
    <location>
        <begin position="399"/>
        <end position="518"/>
    </location>
</feature>
<feature type="region of interest" description="Disordered" evidence="3">
    <location>
        <begin position="597"/>
        <end position="620"/>
    </location>
</feature>
<gene>
    <name evidence="1" type="primary">kefC</name>
    <name type="ordered locus">SBO_0036</name>
</gene>
<name>KEFC_SHIBS</name>
<sequence length="620" mass="67750">MDSHTLIQALIYLGSAALIVPIAVRLGLGSVLGYLIAGCIIGPWGLRLVTDAESILHFAEIGVVLMLFIIGLELDPQRLWKLRAAVFGGGALQMVICGGLLGLFCMLLGLRWQVAELIGMTLALSSTAIAMQAMNERNLMVTQMGRSAFAVLLFQDIAAIPLVAMIPLLATSSASTTMGAFALSALKVAGALVLVVLLGRYVTRPALRFVARSGLREVFSAVALFLVFGFGLLLEEVGLSMAMGAFLAGVLLASSEYRHALESDIEPFKGLLLGLFFIGVGMSIDFGTLLENPLRIVILLLGFLIIKIAMLWLIARPLQVPNKQRRWFAVLLGQGSEFAFVVFGAAQMANVLEPEWAKSLTLAVALSMAATPILLVILNRLEQSSTEEAREADEIDEEQPRVIIAGFGRFGQITGRLLLSSGVKMVVLDHDPDHIETLRKFGMKVFYGDATRMDLLESAGAAKAEVLINAIDDPQTNLQLTEMVKEHFPHLQIIARARDVDHYIRLRQAGVEKPERETFEGALKTGRLALESLGLGPYEARERADVFRRFNIQMVEEMAMVENDTKARAAVYKRTSAMLSEIITEDREHLSLIQRHGWQGTEEGKHTGNMADEPETKPSS</sequence>
<proteinExistence type="inferred from homology"/>
<protein>
    <recommendedName>
        <fullName evidence="1">Glutathione-regulated potassium-efflux system protein KefC</fullName>
    </recommendedName>
    <alternativeName>
        <fullName evidence="1">K(+)/H(+) antiporter</fullName>
    </alternativeName>
</protein>
<dbReference type="EMBL" id="CP000036">
    <property type="protein sequence ID" value="ABB64772.1"/>
    <property type="molecule type" value="Genomic_DNA"/>
</dbReference>
<dbReference type="RefSeq" id="WP_000377129.1">
    <property type="nucleotide sequence ID" value="NC_007613.1"/>
</dbReference>
<dbReference type="SMR" id="Q326I6"/>
<dbReference type="KEGG" id="sbo:SBO_0036"/>
<dbReference type="HOGENOM" id="CLU_005126_9_3_6"/>
<dbReference type="Proteomes" id="UP000007067">
    <property type="component" value="Chromosome"/>
</dbReference>
<dbReference type="GO" id="GO:0005886">
    <property type="term" value="C:plasma membrane"/>
    <property type="evidence" value="ECO:0007669"/>
    <property type="project" value="UniProtKB-SubCell"/>
</dbReference>
<dbReference type="GO" id="GO:0019899">
    <property type="term" value="F:enzyme binding"/>
    <property type="evidence" value="ECO:0007669"/>
    <property type="project" value="InterPro"/>
</dbReference>
<dbReference type="GO" id="GO:0015503">
    <property type="term" value="F:glutathione-regulated potassium exporter activity"/>
    <property type="evidence" value="ECO:0007669"/>
    <property type="project" value="UniProtKB-UniRule"/>
</dbReference>
<dbReference type="GO" id="GO:0015643">
    <property type="term" value="F:toxic substance binding"/>
    <property type="evidence" value="ECO:0007669"/>
    <property type="project" value="InterPro"/>
</dbReference>
<dbReference type="GO" id="GO:1902600">
    <property type="term" value="P:proton transmembrane transport"/>
    <property type="evidence" value="ECO:0007669"/>
    <property type="project" value="InterPro"/>
</dbReference>
<dbReference type="GO" id="GO:0051595">
    <property type="term" value="P:response to methylglyoxal"/>
    <property type="evidence" value="ECO:0007669"/>
    <property type="project" value="InterPro"/>
</dbReference>
<dbReference type="FunFam" id="1.20.1530.20:FF:000001">
    <property type="entry name" value="Glutathione-regulated potassium-efflux system protein KefB"/>
    <property type="match status" value="1"/>
</dbReference>
<dbReference type="FunFam" id="3.40.50.720:FF:000036">
    <property type="entry name" value="Glutathione-regulated potassium-efflux system protein KefB"/>
    <property type="match status" value="1"/>
</dbReference>
<dbReference type="Gene3D" id="1.20.1530.20">
    <property type="match status" value="1"/>
</dbReference>
<dbReference type="Gene3D" id="3.40.50.720">
    <property type="entry name" value="NAD(P)-binding Rossmann-like Domain"/>
    <property type="match status" value="1"/>
</dbReference>
<dbReference type="HAMAP" id="MF_01413">
    <property type="entry name" value="K_H_efflux_KefC"/>
    <property type="match status" value="1"/>
</dbReference>
<dbReference type="InterPro" id="IPR006153">
    <property type="entry name" value="Cation/H_exchanger_TM"/>
</dbReference>
<dbReference type="InterPro" id="IPR004771">
    <property type="entry name" value="K/H_exchanger"/>
</dbReference>
<dbReference type="InterPro" id="IPR023941">
    <property type="entry name" value="K_H_efflux_KefC"/>
</dbReference>
<dbReference type="InterPro" id="IPR006036">
    <property type="entry name" value="K_uptake_TrkA"/>
</dbReference>
<dbReference type="InterPro" id="IPR038770">
    <property type="entry name" value="Na+/solute_symporter_sf"/>
</dbReference>
<dbReference type="InterPro" id="IPR036291">
    <property type="entry name" value="NAD(P)-bd_dom_sf"/>
</dbReference>
<dbReference type="InterPro" id="IPR003148">
    <property type="entry name" value="RCK_N"/>
</dbReference>
<dbReference type="NCBIfam" id="TIGR00932">
    <property type="entry name" value="2a37"/>
    <property type="match status" value="1"/>
</dbReference>
<dbReference type="NCBIfam" id="NF002924">
    <property type="entry name" value="PRK03562.1"/>
    <property type="match status" value="1"/>
</dbReference>
<dbReference type="PANTHER" id="PTHR46157:SF3">
    <property type="entry name" value="GLUTATHIONE-REGULATED POTASSIUM-EFFLUX SYSTEM PROTEIN KEFC"/>
    <property type="match status" value="1"/>
</dbReference>
<dbReference type="PANTHER" id="PTHR46157">
    <property type="entry name" value="K(+) EFFLUX ANTIPORTER 3, CHLOROPLASTIC"/>
    <property type="match status" value="1"/>
</dbReference>
<dbReference type="Pfam" id="PF00999">
    <property type="entry name" value="Na_H_Exchanger"/>
    <property type="match status" value="1"/>
</dbReference>
<dbReference type="Pfam" id="PF02254">
    <property type="entry name" value="TrkA_N"/>
    <property type="match status" value="1"/>
</dbReference>
<dbReference type="PRINTS" id="PR00335">
    <property type="entry name" value="KUPTAKETRKA"/>
</dbReference>
<dbReference type="SUPFAM" id="SSF51735">
    <property type="entry name" value="NAD(P)-binding Rossmann-fold domains"/>
    <property type="match status" value="1"/>
</dbReference>
<dbReference type="PROSITE" id="PS51201">
    <property type="entry name" value="RCK_N"/>
    <property type="match status" value="1"/>
</dbReference>
<keyword id="KW-0050">Antiport</keyword>
<keyword id="KW-0997">Cell inner membrane</keyword>
<keyword id="KW-1003">Cell membrane</keyword>
<keyword id="KW-0406">Ion transport</keyword>
<keyword id="KW-0472">Membrane</keyword>
<keyword id="KW-0630">Potassium</keyword>
<keyword id="KW-0633">Potassium transport</keyword>
<keyword id="KW-0812">Transmembrane</keyword>
<keyword id="KW-1133">Transmembrane helix</keyword>
<keyword id="KW-0813">Transport</keyword>
<evidence type="ECO:0000255" key="1">
    <source>
        <dbReference type="HAMAP-Rule" id="MF_01413"/>
    </source>
</evidence>
<evidence type="ECO:0000255" key="2">
    <source>
        <dbReference type="PROSITE-ProRule" id="PRU00543"/>
    </source>
</evidence>
<evidence type="ECO:0000256" key="3">
    <source>
        <dbReference type="SAM" id="MobiDB-lite"/>
    </source>
</evidence>